<evidence type="ECO:0000255" key="1">
    <source>
        <dbReference type="HAMAP-Rule" id="MF_00265"/>
    </source>
</evidence>
<evidence type="ECO:0007829" key="2">
    <source>
        <dbReference type="PDB" id="1W8I"/>
    </source>
</evidence>
<dbReference type="EC" id="3.1.-.-" evidence="1"/>
<dbReference type="EMBL" id="AE000782">
    <property type="protein sequence ID" value="AAB89566.1"/>
    <property type="molecule type" value="Genomic_DNA"/>
</dbReference>
<dbReference type="PIR" id="B69460">
    <property type="entry name" value="B69460"/>
</dbReference>
<dbReference type="RefSeq" id="WP_010879179.1">
    <property type="nucleotide sequence ID" value="NC_000917.1"/>
</dbReference>
<dbReference type="PDB" id="1W8I">
    <property type="method" value="X-ray"/>
    <property type="resolution" value="2.10 A"/>
    <property type="chains" value="A=1-156"/>
</dbReference>
<dbReference type="PDBsum" id="1W8I"/>
<dbReference type="SMR" id="O28590"/>
<dbReference type="STRING" id="224325.AF_1683"/>
<dbReference type="PaxDb" id="224325-AF_1683"/>
<dbReference type="EnsemblBacteria" id="AAB89566">
    <property type="protein sequence ID" value="AAB89566"/>
    <property type="gene ID" value="AF_1683"/>
</dbReference>
<dbReference type="KEGG" id="afu:AF_1683"/>
<dbReference type="eggNOG" id="arCOG04502">
    <property type="taxonomic scope" value="Archaea"/>
</dbReference>
<dbReference type="HOGENOM" id="CLU_1682583_0_0_2"/>
<dbReference type="EvolutionaryTrace" id="O28590"/>
<dbReference type="Proteomes" id="UP000002199">
    <property type="component" value="Chromosome"/>
</dbReference>
<dbReference type="GO" id="GO:0000287">
    <property type="term" value="F:magnesium ion binding"/>
    <property type="evidence" value="ECO:0007669"/>
    <property type="project" value="UniProtKB-UniRule"/>
</dbReference>
<dbReference type="GO" id="GO:0004521">
    <property type="term" value="F:RNA endonuclease activity"/>
    <property type="evidence" value="ECO:0007669"/>
    <property type="project" value="InterPro"/>
</dbReference>
<dbReference type="GO" id="GO:0016075">
    <property type="term" value="P:rRNA catabolic process"/>
    <property type="evidence" value="ECO:0007669"/>
    <property type="project" value="TreeGrafter"/>
</dbReference>
<dbReference type="CDD" id="cd18679">
    <property type="entry name" value="PIN_VapC-Af1683-like"/>
    <property type="match status" value="1"/>
</dbReference>
<dbReference type="Gene3D" id="3.40.50.1010">
    <property type="entry name" value="5'-nuclease"/>
    <property type="match status" value="1"/>
</dbReference>
<dbReference type="HAMAP" id="MF_00265">
    <property type="entry name" value="VapC_Nob1"/>
    <property type="match status" value="1"/>
</dbReference>
<dbReference type="InterPro" id="IPR029060">
    <property type="entry name" value="PIN-like_dom_sf"/>
</dbReference>
<dbReference type="InterPro" id="IPR002716">
    <property type="entry name" value="PIN_dom"/>
</dbReference>
<dbReference type="InterPro" id="IPR039018">
    <property type="entry name" value="VapC20-like"/>
</dbReference>
<dbReference type="InterPro" id="IPR022907">
    <property type="entry name" value="VapC_family"/>
</dbReference>
<dbReference type="PANTHER" id="PTHR42188">
    <property type="entry name" value="23S RRNA-SPECIFIC ENDONUCLEASE VAPC20"/>
    <property type="match status" value="1"/>
</dbReference>
<dbReference type="PANTHER" id="PTHR42188:SF1">
    <property type="entry name" value="23S RRNA-SPECIFIC ENDONUCLEASE VAPC20"/>
    <property type="match status" value="1"/>
</dbReference>
<dbReference type="Pfam" id="PF01850">
    <property type="entry name" value="PIN"/>
    <property type="match status" value="1"/>
</dbReference>
<dbReference type="SUPFAM" id="SSF88723">
    <property type="entry name" value="PIN domain-like"/>
    <property type="match status" value="1"/>
</dbReference>
<accession>O28590</accession>
<comment type="function">
    <text evidence="1">Toxic component of a type II toxin-antitoxin (TA) system. An RNase.</text>
</comment>
<comment type="cofactor">
    <cofactor evidence="1">
        <name>Mg(2+)</name>
        <dbReference type="ChEBI" id="CHEBI:18420"/>
    </cofactor>
</comment>
<comment type="similarity">
    <text evidence="1">Belongs to the PINc/VapC protein family.</text>
</comment>
<keyword id="KW-0002">3D-structure</keyword>
<keyword id="KW-0378">Hydrolase</keyword>
<keyword id="KW-0460">Magnesium</keyword>
<keyword id="KW-0479">Metal-binding</keyword>
<keyword id="KW-0540">Nuclease</keyword>
<keyword id="KW-1185">Reference proteome</keyword>
<keyword id="KW-1277">Toxin-antitoxin system</keyword>
<gene>
    <name type="ordered locus">AF_1683</name>
</gene>
<name>Y1683_ARCFU</name>
<proteinExistence type="evidence at protein level"/>
<organism>
    <name type="scientific">Archaeoglobus fulgidus (strain ATCC 49558 / DSM 4304 / JCM 9628 / NBRC 100126 / VC-16)</name>
    <dbReference type="NCBI Taxonomy" id="224325"/>
    <lineage>
        <taxon>Archaea</taxon>
        <taxon>Methanobacteriati</taxon>
        <taxon>Methanobacteriota</taxon>
        <taxon>Archaeoglobi</taxon>
        <taxon>Archaeoglobales</taxon>
        <taxon>Archaeoglobaceae</taxon>
        <taxon>Archaeoglobus</taxon>
    </lineage>
</organism>
<sequence length="156" mass="17841">MAALIDTGIFFGFYSLKDVHHMDSVAIVVHAVEGKWGRLFVTNHILDETLTLLKYKKLPADKFLEGFVESGVLNIIYTDDEVERKALEVFKARVYEKGFSYTDAISEVVAEELKLKLISYDSRFSLPTIGRDYWKSLDESERKRISAILREKGIDG</sequence>
<feature type="chain" id="PRO_0000128047" description="VapC ribonuclease AF_1683">
    <location>
        <begin position="1"/>
        <end position="156"/>
    </location>
</feature>
<feature type="domain" description="PINc" evidence="1">
    <location>
        <begin position="4"/>
        <end position="125"/>
    </location>
</feature>
<feature type="binding site" evidence="1">
    <location>
        <position position="6"/>
    </location>
    <ligand>
        <name>Mg(2+)</name>
        <dbReference type="ChEBI" id="CHEBI:18420"/>
    </ligand>
</feature>
<feature type="binding site" evidence="1">
    <location>
        <position position="103"/>
    </location>
    <ligand>
        <name>Mg(2+)</name>
        <dbReference type="ChEBI" id="CHEBI:18420"/>
    </ligand>
</feature>
<feature type="strand" evidence="2">
    <location>
        <begin position="2"/>
        <end position="5"/>
    </location>
</feature>
<feature type="helix" evidence="2">
    <location>
        <begin position="7"/>
        <end position="14"/>
    </location>
</feature>
<feature type="helix" evidence="2">
    <location>
        <begin position="21"/>
        <end position="32"/>
    </location>
</feature>
<feature type="turn" evidence="2">
    <location>
        <begin position="33"/>
        <end position="36"/>
    </location>
</feature>
<feature type="strand" evidence="2">
    <location>
        <begin position="37"/>
        <end position="42"/>
    </location>
</feature>
<feature type="helix" evidence="2">
    <location>
        <begin position="43"/>
        <end position="55"/>
    </location>
</feature>
<feature type="helix" evidence="2">
    <location>
        <begin position="60"/>
        <end position="67"/>
    </location>
</feature>
<feature type="turn" evidence="2">
    <location>
        <begin position="68"/>
        <end position="70"/>
    </location>
</feature>
<feature type="strand" evidence="2">
    <location>
        <begin position="71"/>
        <end position="76"/>
    </location>
</feature>
<feature type="helix" evidence="2">
    <location>
        <begin position="80"/>
        <end position="92"/>
    </location>
</feature>
<feature type="turn" evidence="2">
    <location>
        <begin position="93"/>
        <end position="95"/>
    </location>
</feature>
<feature type="helix" evidence="2">
    <location>
        <begin position="101"/>
        <end position="113"/>
    </location>
</feature>
<feature type="strand" evidence="2">
    <location>
        <begin position="116"/>
        <end position="118"/>
    </location>
</feature>
<feature type="turn" evidence="2">
    <location>
        <begin position="131"/>
        <end position="136"/>
    </location>
</feature>
<feature type="helix" evidence="2">
    <location>
        <begin position="139"/>
        <end position="151"/>
    </location>
</feature>
<reference key="1">
    <citation type="journal article" date="1997" name="Nature">
        <title>The complete genome sequence of the hyperthermophilic, sulphate-reducing archaeon Archaeoglobus fulgidus.</title>
        <authorList>
            <person name="Klenk H.-P."/>
            <person name="Clayton R.A."/>
            <person name="Tomb J.-F."/>
            <person name="White O."/>
            <person name="Nelson K.E."/>
            <person name="Ketchum K.A."/>
            <person name="Dodson R.J."/>
            <person name="Gwinn M.L."/>
            <person name="Hickey E.K."/>
            <person name="Peterson J.D."/>
            <person name="Richardson D.L."/>
            <person name="Kerlavage A.R."/>
            <person name="Graham D.E."/>
            <person name="Kyrpides N.C."/>
            <person name="Fleischmann R.D."/>
            <person name="Quackenbush J."/>
            <person name="Lee N.H."/>
            <person name="Sutton G.G."/>
            <person name="Gill S.R."/>
            <person name="Kirkness E.F."/>
            <person name="Dougherty B.A."/>
            <person name="McKenney K."/>
            <person name="Adams M.D."/>
            <person name="Loftus B.J."/>
            <person name="Peterson S.N."/>
            <person name="Reich C.I."/>
            <person name="McNeil L.K."/>
            <person name="Badger J.H."/>
            <person name="Glodek A."/>
            <person name="Zhou L."/>
            <person name="Overbeek R."/>
            <person name="Gocayne J.D."/>
            <person name="Weidman J.F."/>
            <person name="McDonald L.A."/>
            <person name="Utterback T.R."/>
            <person name="Cotton M.D."/>
            <person name="Spriggs T."/>
            <person name="Artiach P."/>
            <person name="Kaine B.P."/>
            <person name="Sykes S.M."/>
            <person name="Sadow P.W."/>
            <person name="D'Andrea K.P."/>
            <person name="Bowman C."/>
            <person name="Fujii C."/>
            <person name="Garland S.A."/>
            <person name="Mason T.M."/>
            <person name="Olsen G.J."/>
            <person name="Fraser C.M."/>
            <person name="Smith H.O."/>
            <person name="Woese C.R."/>
            <person name="Venter J.C."/>
        </authorList>
    </citation>
    <scope>NUCLEOTIDE SEQUENCE [LARGE SCALE GENOMIC DNA]</scope>
    <source>
        <strain>ATCC 49558 / DSM 4304 / JCM 9628 / NBRC 100126 / VC-16</strain>
    </source>
</reference>
<reference key="2">
    <citation type="submission" date="2009-02" db="PDB data bank">
        <title>The structure of gene product AF1683 from Archaeoglobus fulgidus.</title>
        <authorList>
            <consortium name="Midwest center for structural genomics (MCSG)"/>
        </authorList>
    </citation>
    <scope>X-RAY CRYSTALLOGRAPHY (2.1 ANGSTROMS)</scope>
</reference>
<protein>
    <recommendedName>
        <fullName>VapC ribonuclease AF_1683</fullName>
        <shortName>RNase AF_1683</shortName>
        <ecNumber evidence="1">3.1.-.-</ecNumber>
    </recommendedName>
    <alternativeName>
        <fullName>Putative toxin AF_1683</fullName>
    </alternativeName>
</protein>